<gene>
    <name evidence="1" type="primary">hscB</name>
    <name type="ordered locus">ABAYE2024</name>
</gene>
<keyword id="KW-0143">Chaperone</keyword>
<accession>B0VD54</accession>
<organism>
    <name type="scientific">Acinetobacter baumannii (strain AYE)</name>
    <dbReference type="NCBI Taxonomy" id="509173"/>
    <lineage>
        <taxon>Bacteria</taxon>
        <taxon>Pseudomonadati</taxon>
        <taxon>Pseudomonadota</taxon>
        <taxon>Gammaproteobacteria</taxon>
        <taxon>Moraxellales</taxon>
        <taxon>Moraxellaceae</taxon>
        <taxon>Acinetobacter</taxon>
        <taxon>Acinetobacter calcoaceticus/baumannii complex</taxon>
    </lineage>
</organism>
<name>HSCB_ACIBY</name>
<sequence>MNHFELFNLPVALDIDLASLKSNFLSLQQQYHPDKAADKDQALIKSSEINQAFKTLSQVDSRAAYLLALKKQDHHLDQSISDFEFLQSALELREQLDEATSSEHLRTLRLEVQQWIDGLVREFKIDYSEEDWAEARDTVRKLRFFQRVLNDIDKAEDQLLDDEDSFDLDDDF</sequence>
<comment type="function">
    <text evidence="1">Co-chaperone involved in the maturation of iron-sulfur cluster-containing proteins. Seems to help targeting proteins to be folded toward HscA.</text>
</comment>
<comment type="subunit">
    <text evidence="1">Interacts with HscA and stimulates its ATPase activity.</text>
</comment>
<comment type="similarity">
    <text evidence="1">Belongs to the HscB family.</text>
</comment>
<dbReference type="EMBL" id="CU459141">
    <property type="protein sequence ID" value="CAM86901.1"/>
    <property type="molecule type" value="Genomic_DNA"/>
</dbReference>
<dbReference type="RefSeq" id="WP_001015254.1">
    <property type="nucleotide sequence ID" value="NZ_JBDGFB010000001.1"/>
</dbReference>
<dbReference type="SMR" id="B0VD54"/>
<dbReference type="EnsemblBacteria" id="CAM86901">
    <property type="protein sequence ID" value="CAM86901"/>
    <property type="gene ID" value="ABAYE2024"/>
</dbReference>
<dbReference type="GeneID" id="92893838"/>
<dbReference type="KEGG" id="aby:ABAYE2024"/>
<dbReference type="HOGENOM" id="CLU_068529_2_0_6"/>
<dbReference type="GO" id="GO:0001671">
    <property type="term" value="F:ATPase activator activity"/>
    <property type="evidence" value="ECO:0007669"/>
    <property type="project" value="InterPro"/>
</dbReference>
<dbReference type="GO" id="GO:0051087">
    <property type="term" value="F:protein-folding chaperone binding"/>
    <property type="evidence" value="ECO:0007669"/>
    <property type="project" value="InterPro"/>
</dbReference>
<dbReference type="GO" id="GO:0044571">
    <property type="term" value="P:[2Fe-2S] cluster assembly"/>
    <property type="evidence" value="ECO:0007669"/>
    <property type="project" value="InterPro"/>
</dbReference>
<dbReference type="GO" id="GO:0051259">
    <property type="term" value="P:protein complex oligomerization"/>
    <property type="evidence" value="ECO:0007669"/>
    <property type="project" value="InterPro"/>
</dbReference>
<dbReference type="GO" id="GO:0006457">
    <property type="term" value="P:protein folding"/>
    <property type="evidence" value="ECO:0007669"/>
    <property type="project" value="UniProtKB-UniRule"/>
</dbReference>
<dbReference type="CDD" id="cd06257">
    <property type="entry name" value="DnaJ"/>
    <property type="match status" value="1"/>
</dbReference>
<dbReference type="Gene3D" id="1.10.287.110">
    <property type="entry name" value="DnaJ domain"/>
    <property type="match status" value="1"/>
</dbReference>
<dbReference type="Gene3D" id="1.20.1280.20">
    <property type="entry name" value="HscB, C-terminal domain"/>
    <property type="match status" value="1"/>
</dbReference>
<dbReference type="HAMAP" id="MF_00682">
    <property type="entry name" value="HscB"/>
    <property type="match status" value="1"/>
</dbReference>
<dbReference type="InterPro" id="IPR001623">
    <property type="entry name" value="DnaJ_domain"/>
</dbReference>
<dbReference type="InterPro" id="IPR004640">
    <property type="entry name" value="HscB"/>
</dbReference>
<dbReference type="InterPro" id="IPR036386">
    <property type="entry name" value="HscB_C_sf"/>
</dbReference>
<dbReference type="InterPro" id="IPR009073">
    <property type="entry name" value="HscB_oligo_C"/>
</dbReference>
<dbReference type="InterPro" id="IPR036869">
    <property type="entry name" value="J_dom_sf"/>
</dbReference>
<dbReference type="NCBIfam" id="TIGR00714">
    <property type="entry name" value="hscB"/>
    <property type="match status" value="1"/>
</dbReference>
<dbReference type="PANTHER" id="PTHR14021">
    <property type="entry name" value="IRON-SULFUR CLUSTER CO-CHAPERONE PROTEIN HSCB"/>
    <property type="match status" value="1"/>
</dbReference>
<dbReference type="PANTHER" id="PTHR14021:SF15">
    <property type="entry name" value="IRON-SULFUR CLUSTER CO-CHAPERONE PROTEIN HSCB"/>
    <property type="match status" value="1"/>
</dbReference>
<dbReference type="Pfam" id="PF00226">
    <property type="entry name" value="DnaJ"/>
    <property type="match status" value="1"/>
</dbReference>
<dbReference type="Pfam" id="PF07743">
    <property type="entry name" value="HSCB_C"/>
    <property type="match status" value="1"/>
</dbReference>
<dbReference type="SMART" id="SM00271">
    <property type="entry name" value="DnaJ"/>
    <property type="match status" value="1"/>
</dbReference>
<dbReference type="SUPFAM" id="SSF46565">
    <property type="entry name" value="Chaperone J-domain"/>
    <property type="match status" value="1"/>
</dbReference>
<dbReference type="SUPFAM" id="SSF47144">
    <property type="entry name" value="HSC20 (HSCB), C-terminal oligomerisation domain"/>
    <property type="match status" value="1"/>
</dbReference>
<dbReference type="PROSITE" id="PS50076">
    <property type="entry name" value="DNAJ_2"/>
    <property type="match status" value="1"/>
</dbReference>
<reference key="1">
    <citation type="journal article" date="2008" name="PLoS ONE">
        <title>Comparative analysis of Acinetobacters: three genomes for three lifestyles.</title>
        <authorList>
            <person name="Vallenet D."/>
            <person name="Nordmann P."/>
            <person name="Barbe V."/>
            <person name="Poirel L."/>
            <person name="Mangenot S."/>
            <person name="Bataille E."/>
            <person name="Dossat C."/>
            <person name="Gas S."/>
            <person name="Kreimeyer A."/>
            <person name="Lenoble P."/>
            <person name="Oztas S."/>
            <person name="Poulain J."/>
            <person name="Segurens B."/>
            <person name="Robert C."/>
            <person name="Abergel C."/>
            <person name="Claverie J.-M."/>
            <person name="Raoult D."/>
            <person name="Medigue C."/>
            <person name="Weissenbach J."/>
            <person name="Cruveiller S."/>
        </authorList>
    </citation>
    <scope>NUCLEOTIDE SEQUENCE [LARGE SCALE GENOMIC DNA]</scope>
    <source>
        <strain>AYE</strain>
    </source>
</reference>
<protein>
    <recommendedName>
        <fullName evidence="1">Co-chaperone protein HscB homolog</fullName>
    </recommendedName>
</protein>
<evidence type="ECO:0000255" key="1">
    <source>
        <dbReference type="HAMAP-Rule" id="MF_00682"/>
    </source>
</evidence>
<proteinExistence type="inferred from homology"/>
<feature type="chain" id="PRO_1000131723" description="Co-chaperone protein HscB homolog">
    <location>
        <begin position="1"/>
        <end position="172"/>
    </location>
</feature>
<feature type="domain" description="J" evidence="1">
    <location>
        <begin position="2"/>
        <end position="69"/>
    </location>
</feature>